<accession>Q7NEG0</accession>
<protein>
    <recommendedName>
        <fullName evidence="1">Large ribosomal subunit protein uL29</fullName>
    </recommendedName>
    <alternativeName>
        <fullName evidence="2">50S ribosomal protein L29</fullName>
    </alternativeName>
</protein>
<proteinExistence type="inferred from homology"/>
<feature type="chain" id="PRO_0000130395" description="Large ribosomal subunit protein uL29">
    <location>
        <begin position="1"/>
        <end position="70"/>
    </location>
</feature>
<comment type="similarity">
    <text evidence="1">Belongs to the universal ribosomal protein uL29 family.</text>
</comment>
<reference key="1">
    <citation type="journal article" date="2003" name="DNA Res.">
        <title>Complete genome structure of Gloeobacter violaceus PCC 7421, a cyanobacterium that lacks thylakoids.</title>
        <authorList>
            <person name="Nakamura Y."/>
            <person name="Kaneko T."/>
            <person name="Sato S."/>
            <person name="Mimuro M."/>
            <person name="Miyashita H."/>
            <person name="Tsuchiya T."/>
            <person name="Sasamoto S."/>
            <person name="Watanabe A."/>
            <person name="Kawashima K."/>
            <person name="Kishida Y."/>
            <person name="Kiyokawa C."/>
            <person name="Kohara M."/>
            <person name="Matsumoto M."/>
            <person name="Matsuno A."/>
            <person name="Nakazaki N."/>
            <person name="Shimpo S."/>
            <person name="Takeuchi C."/>
            <person name="Yamada M."/>
            <person name="Tabata S."/>
        </authorList>
    </citation>
    <scope>NUCLEOTIDE SEQUENCE [LARGE SCALE GENOMIC DNA]</scope>
    <source>
        <strain>ATCC 29082 / PCC 7421</strain>
    </source>
</reference>
<sequence>MPLPKIDDWRELSDEEISEQILATKKELFELRLQKATRQLEKPHLVRHAKHKLAQLMLLESQRTAAAKEK</sequence>
<organism>
    <name type="scientific">Gloeobacter violaceus (strain ATCC 29082 / PCC 7421)</name>
    <dbReference type="NCBI Taxonomy" id="251221"/>
    <lineage>
        <taxon>Bacteria</taxon>
        <taxon>Bacillati</taxon>
        <taxon>Cyanobacteriota</taxon>
        <taxon>Cyanophyceae</taxon>
        <taxon>Gloeobacterales</taxon>
        <taxon>Gloeobacteraceae</taxon>
        <taxon>Gloeobacter</taxon>
    </lineage>
</organism>
<name>RL29_GLOVI</name>
<gene>
    <name evidence="1" type="primary">rpmC</name>
    <name evidence="1" type="synonym">rpl29</name>
    <name type="ordered locus">gsl3919</name>
</gene>
<keyword id="KW-1185">Reference proteome</keyword>
<keyword id="KW-0687">Ribonucleoprotein</keyword>
<keyword id="KW-0689">Ribosomal protein</keyword>
<dbReference type="EMBL" id="BA000045">
    <property type="protein sequence ID" value="BAC91860.1"/>
    <property type="molecule type" value="Genomic_DNA"/>
</dbReference>
<dbReference type="RefSeq" id="NP_926865.1">
    <property type="nucleotide sequence ID" value="NC_005125.1"/>
</dbReference>
<dbReference type="RefSeq" id="WP_011143907.1">
    <property type="nucleotide sequence ID" value="NC_005125.1"/>
</dbReference>
<dbReference type="SMR" id="Q7NEG0"/>
<dbReference type="FunCoup" id="Q7NEG0">
    <property type="interactions" value="104"/>
</dbReference>
<dbReference type="STRING" id="251221.gene:10761436"/>
<dbReference type="EnsemblBacteria" id="BAC91860">
    <property type="protein sequence ID" value="BAC91860"/>
    <property type="gene ID" value="BAC91860"/>
</dbReference>
<dbReference type="KEGG" id="gvi:gsl3919"/>
<dbReference type="PATRIC" id="fig|251221.4.peg.3952"/>
<dbReference type="eggNOG" id="COG0255">
    <property type="taxonomic scope" value="Bacteria"/>
</dbReference>
<dbReference type="HOGENOM" id="CLU_158491_0_0_3"/>
<dbReference type="InParanoid" id="Q7NEG0"/>
<dbReference type="OrthoDB" id="9815192at2"/>
<dbReference type="PhylomeDB" id="Q7NEG0"/>
<dbReference type="Proteomes" id="UP000000557">
    <property type="component" value="Chromosome"/>
</dbReference>
<dbReference type="GO" id="GO:0022625">
    <property type="term" value="C:cytosolic large ribosomal subunit"/>
    <property type="evidence" value="ECO:0000318"/>
    <property type="project" value="GO_Central"/>
</dbReference>
<dbReference type="GO" id="GO:0003735">
    <property type="term" value="F:structural constituent of ribosome"/>
    <property type="evidence" value="ECO:0007669"/>
    <property type="project" value="InterPro"/>
</dbReference>
<dbReference type="GO" id="GO:0006412">
    <property type="term" value="P:translation"/>
    <property type="evidence" value="ECO:0007669"/>
    <property type="project" value="UniProtKB-UniRule"/>
</dbReference>
<dbReference type="CDD" id="cd00427">
    <property type="entry name" value="Ribosomal_L29_HIP"/>
    <property type="match status" value="1"/>
</dbReference>
<dbReference type="FunFam" id="1.10.287.310:FF:000005">
    <property type="entry name" value="50S ribosomal protein L29"/>
    <property type="match status" value="1"/>
</dbReference>
<dbReference type="Gene3D" id="1.10.287.310">
    <property type="match status" value="1"/>
</dbReference>
<dbReference type="HAMAP" id="MF_00374">
    <property type="entry name" value="Ribosomal_uL29"/>
    <property type="match status" value="1"/>
</dbReference>
<dbReference type="InterPro" id="IPR050063">
    <property type="entry name" value="Ribosomal_protein_uL29"/>
</dbReference>
<dbReference type="InterPro" id="IPR001854">
    <property type="entry name" value="Ribosomal_uL29"/>
</dbReference>
<dbReference type="InterPro" id="IPR036049">
    <property type="entry name" value="Ribosomal_uL29_sf"/>
</dbReference>
<dbReference type="NCBIfam" id="TIGR00012">
    <property type="entry name" value="L29"/>
    <property type="match status" value="1"/>
</dbReference>
<dbReference type="PANTHER" id="PTHR10916">
    <property type="entry name" value="60S RIBOSOMAL PROTEIN L35/50S RIBOSOMAL PROTEIN L29"/>
    <property type="match status" value="1"/>
</dbReference>
<dbReference type="PANTHER" id="PTHR10916:SF0">
    <property type="entry name" value="LARGE RIBOSOMAL SUBUNIT PROTEIN UL29C"/>
    <property type="match status" value="1"/>
</dbReference>
<dbReference type="Pfam" id="PF00831">
    <property type="entry name" value="Ribosomal_L29"/>
    <property type="match status" value="1"/>
</dbReference>
<dbReference type="SUPFAM" id="SSF46561">
    <property type="entry name" value="Ribosomal protein L29 (L29p)"/>
    <property type="match status" value="1"/>
</dbReference>
<evidence type="ECO:0000255" key="1">
    <source>
        <dbReference type="HAMAP-Rule" id="MF_00374"/>
    </source>
</evidence>
<evidence type="ECO:0000305" key="2"/>